<proteinExistence type="inferred from homology"/>
<accession>Q9BDS9</accession>
<comment type="function">
    <text evidence="1">Exhibits antimicrobial activity against Gram-negative bacteria and Gram-positive bacteria, with highest activity against Gram-negative bacteria (By similarity). Antimicrobial activity against P.aruginosa seems to be salt-sensitive and is reduced with high salt concentrations greater than 25 mM (By similarity). Also exhibits antimicrobial activity against the yeast C.albicans (By similarity). Permeabilizes C.albicans cell membranes via targeting plasma membrane lipid phosphatidylinositol 4,5-bisphosphate (PIP2), thereby leading to cell fragmentation and cell death (By similarity). Acts as a ligand for C-C chemokine receptor CCR6 (By similarity). Binds to CCR6 and induces chemotactic activity of CCR6-expressing cells, such as immature dendritic cells and memory T cells (By similarity).</text>
</comment>
<comment type="subunit">
    <text evidence="1">Monomer (By similarity). Homodimer (By similarity).</text>
</comment>
<comment type="subcellular location">
    <subcellularLocation>
        <location evidence="1">Secreted</location>
    </subcellularLocation>
</comment>
<comment type="similarity">
    <text evidence="3">Belongs to the beta-defensin family. LAP/TAP subfamily.</text>
</comment>
<organism>
    <name type="scientific">Macaca mulatta</name>
    <name type="common">Rhesus macaque</name>
    <dbReference type="NCBI Taxonomy" id="9544"/>
    <lineage>
        <taxon>Eukaryota</taxon>
        <taxon>Metazoa</taxon>
        <taxon>Chordata</taxon>
        <taxon>Craniata</taxon>
        <taxon>Vertebrata</taxon>
        <taxon>Euteleostomi</taxon>
        <taxon>Mammalia</taxon>
        <taxon>Eutheria</taxon>
        <taxon>Euarchontoglires</taxon>
        <taxon>Primates</taxon>
        <taxon>Haplorrhini</taxon>
        <taxon>Catarrhini</taxon>
        <taxon>Cercopithecidae</taxon>
        <taxon>Cercopithecinae</taxon>
        <taxon>Macaca</taxon>
    </lineage>
</organism>
<sequence length="64" mass="7065">MRVLYLLFSFLFIFLMPLPGVFGGIGDPVTCLKNGAICHPVFCPRRYKQIGTCGLPGTKCCKKP</sequence>
<protein>
    <recommendedName>
        <fullName evidence="1">Defensin beta 4A</fullName>
    </recommendedName>
    <alternativeName>
        <fullName>Beta-defensin 2</fullName>
        <shortName>BD-2</shortName>
    </alternativeName>
    <alternativeName>
        <fullName>Defensin, beta 2</fullName>
    </alternativeName>
    <alternativeName>
        <fullName>RhBD-2</fullName>
    </alternativeName>
</protein>
<feature type="signal peptide" evidence="2">
    <location>
        <begin position="1"/>
        <end position="23"/>
    </location>
</feature>
<feature type="peptide" id="PRO_0000006969" description="Defensin beta 4A">
    <location>
        <begin position="24"/>
        <end position="64"/>
    </location>
</feature>
<feature type="region of interest" description="Phosphatidylinositol 4,5-bisphosphate (PIP2) binding" evidence="1">
    <location>
        <begin position="33"/>
        <end position="48"/>
    </location>
</feature>
<feature type="disulfide bond" evidence="1">
    <location>
        <begin position="31"/>
        <end position="60"/>
    </location>
</feature>
<feature type="disulfide bond" evidence="1">
    <location>
        <begin position="38"/>
        <end position="53"/>
    </location>
</feature>
<feature type="disulfide bond" evidence="1">
    <location>
        <begin position="43"/>
        <end position="61"/>
    </location>
</feature>
<evidence type="ECO:0000250" key="1">
    <source>
        <dbReference type="UniProtKB" id="O15263"/>
    </source>
</evidence>
<evidence type="ECO:0000255" key="2"/>
<evidence type="ECO:0000305" key="3"/>
<keyword id="KW-0044">Antibiotic</keyword>
<keyword id="KW-0929">Antimicrobial</keyword>
<keyword id="KW-0211">Defensin</keyword>
<keyword id="KW-1015">Disulfide bond</keyword>
<keyword id="KW-1185">Reference proteome</keyword>
<keyword id="KW-0964">Secreted</keyword>
<keyword id="KW-0732">Signal</keyword>
<dbReference type="EMBL" id="AF288286">
    <property type="protein sequence ID" value="AAK26259.1"/>
    <property type="molecule type" value="mRNA"/>
</dbReference>
<dbReference type="RefSeq" id="NP_001027999.1">
    <property type="nucleotide sequence ID" value="NM_001032827.1"/>
</dbReference>
<dbReference type="SMR" id="Q9BDS9"/>
<dbReference type="FunCoup" id="Q9BDS9">
    <property type="interactions" value="237"/>
</dbReference>
<dbReference type="STRING" id="9544.ENSMMUP00000080339"/>
<dbReference type="InParanoid" id="Q9BDS9"/>
<dbReference type="Proteomes" id="UP000006718">
    <property type="component" value="Unassembled WGS sequence"/>
</dbReference>
<dbReference type="GO" id="GO:0005615">
    <property type="term" value="C:extracellular space"/>
    <property type="evidence" value="ECO:0000318"/>
    <property type="project" value="GO_Central"/>
</dbReference>
<dbReference type="GO" id="GO:0031731">
    <property type="term" value="F:CCR6 chemokine receptor binding"/>
    <property type="evidence" value="ECO:0000250"/>
    <property type="project" value="UniProtKB"/>
</dbReference>
<dbReference type="GO" id="GO:0042056">
    <property type="term" value="F:chemoattractant activity"/>
    <property type="evidence" value="ECO:0000318"/>
    <property type="project" value="GO_Central"/>
</dbReference>
<dbReference type="GO" id="GO:0005546">
    <property type="term" value="F:phosphatidylinositol-4,5-bisphosphate binding"/>
    <property type="evidence" value="ECO:0000250"/>
    <property type="project" value="UniProtKB"/>
</dbReference>
<dbReference type="GO" id="GO:0061760">
    <property type="term" value="P:antifungal innate immune response"/>
    <property type="evidence" value="ECO:0000250"/>
    <property type="project" value="UniProtKB"/>
</dbReference>
<dbReference type="GO" id="GO:0061844">
    <property type="term" value="P:antimicrobial humoral immune response mediated by antimicrobial peptide"/>
    <property type="evidence" value="ECO:0000250"/>
    <property type="project" value="UniProtKB"/>
</dbReference>
<dbReference type="GO" id="GO:0060326">
    <property type="term" value="P:cell chemotaxis"/>
    <property type="evidence" value="ECO:0000318"/>
    <property type="project" value="GO_Central"/>
</dbReference>
<dbReference type="GO" id="GO:0006935">
    <property type="term" value="P:chemotaxis"/>
    <property type="evidence" value="ECO:0000250"/>
    <property type="project" value="UniProtKB"/>
</dbReference>
<dbReference type="GO" id="GO:0042742">
    <property type="term" value="P:defense response to bacterium"/>
    <property type="evidence" value="ECO:0000318"/>
    <property type="project" value="GO_Central"/>
</dbReference>
<dbReference type="GO" id="GO:0050832">
    <property type="term" value="P:defense response to fungus"/>
    <property type="evidence" value="ECO:0000250"/>
    <property type="project" value="UniProtKB"/>
</dbReference>
<dbReference type="GO" id="GO:0050829">
    <property type="term" value="P:defense response to Gram-negative bacterium"/>
    <property type="evidence" value="ECO:0000250"/>
    <property type="project" value="UniProtKB"/>
</dbReference>
<dbReference type="GO" id="GO:0050830">
    <property type="term" value="P:defense response to Gram-positive bacterium"/>
    <property type="evidence" value="ECO:0000250"/>
    <property type="project" value="UniProtKB"/>
</dbReference>
<dbReference type="FunFam" id="3.10.360.10:FF:000001">
    <property type="entry name" value="Beta-defensin 1"/>
    <property type="match status" value="1"/>
</dbReference>
<dbReference type="Gene3D" id="3.10.360.10">
    <property type="entry name" value="Antimicrobial Peptide, Beta-defensin 2, Chain A"/>
    <property type="match status" value="1"/>
</dbReference>
<dbReference type="InterPro" id="IPR006080">
    <property type="entry name" value="Beta/alpha-defensin_C"/>
</dbReference>
<dbReference type="InterPro" id="IPR001855">
    <property type="entry name" value="Defensin_beta-like"/>
</dbReference>
<dbReference type="PANTHER" id="PTHR20515">
    <property type="entry name" value="BETA-DEFENSIN"/>
    <property type="match status" value="1"/>
</dbReference>
<dbReference type="PANTHER" id="PTHR20515:SF2">
    <property type="entry name" value="DEFENSIN BETA 4A"/>
    <property type="match status" value="1"/>
</dbReference>
<dbReference type="Pfam" id="PF00711">
    <property type="entry name" value="Defensin_beta"/>
    <property type="match status" value="1"/>
</dbReference>
<dbReference type="SMART" id="SM00048">
    <property type="entry name" value="DEFSN"/>
    <property type="match status" value="1"/>
</dbReference>
<dbReference type="SUPFAM" id="SSF57392">
    <property type="entry name" value="Defensin-like"/>
    <property type="match status" value="1"/>
</dbReference>
<gene>
    <name type="primary">DEFB4A</name>
    <name type="synonym">DEFB2</name>
    <name type="synonym">DEFB4</name>
</gene>
<reference key="1">
    <citation type="journal article" date="2001" name="Clin. Diagn. Lab. Immunol.">
        <title>Rhesus monkey (Macaca mulatta) mucosal antimicrobial peptides are close homologues of human molecules.</title>
        <authorList>
            <person name="Bals R."/>
            <person name="Lang C."/>
            <person name="Weiner D.J."/>
            <person name="Vogelmeier C."/>
            <person name="Welsch U."/>
            <person name="Wilson J.M."/>
        </authorList>
    </citation>
    <scope>NUCLEOTIDE SEQUENCE [MRNA]</scope>
</reference>
<name>DFB4A_MACMU</name>